<comment type="function">
    <text evidence="4">Probable serine/threonine kinase that functions as a positive regulator of plant immunity. May be involved in the regulation of pattern-triggered immunity (PTI). Does not seem to be involved in responses to brassinosteroid (BR) signaling.</text>
</comment>
<comment type="catalytic activity">
    <reaction evidence="6">
        <text>L-seryl-[protein] + ATP = O-phospho-L-seryl-[protein] + ADP + H(+)</text>
        <dbReference type="Rhea" id="RHEA:17989"/>
        <dbReference type="Rhea" id="RHEA-COMP:9863"/>
        <dbReference type="Rhea" id="RHEA-COMP:11604"/>
        <dbReference type="ChEBI" id="CHEBI:15378"/>
        <dbReference type="ChEBI" id="CHEBI:29999"/>
        <dbReference type="ChEBI" id="CHEBI:30616"/>
        <dbReference type="ChEBI" id="CHEBI:83421"/>
        <dbReference type="ChEBI" id="CHEBI:456216"/>
        <dbReference type="EC" id="2.7.11.1"/>
    </reaction>
</comment>
<comment type="catalytic activity">
    <reaction evidence="6">
        <text>L-threonyl-[protein] + ATP = O-phospho-L-threonyl-[protein] + ADP + H(+)</text>
        <dbReference type="Rhea" id="RHEA:46608"/>
        <dbReference type="Rhea" id="RHEA-COMP:11060"/>
        <dbReference type="Rhea" id="RHEA-COMP:11605"/>
        <dbReference type="ChEBI" id="CHEBI:15378"/>
        <dbReference type="ChEBI" id="CHEBI:30013"/>
        <dbReference type="ChEBI" id="CHEBI:30616"/>
        <dbReference type="ChEBI" id="CHEBI:61977"/>
        <dbReference type="ChEBI" id="CHEBI:456216"/>
        <dbReference type="EC" id="2.7.11.1"/>
    </reaction>
</comment>
<comment type="subcellular location">
    <subcellularLocation>
        <location evidence="1">Cell membrane</location>
        <topology evidence="1">Lipid-anchor</topology>
    </subcellularLocation>
</comment>
<comment type="induction">
    <text evidence="4">Induced by treatment with the elicitors chitin or fagellin22 (flg22).</text>
</comment>
<comment type="miscellaneous">
    <text evidence="4">Plants silencing BSK1-2 exhibit compromised responses to chitin- or flg22-triggered immunity and resistance to Magnaporthe oryzae.</text>
</comment>
<comment type="similarity">
    <text evidence="6">Belongs to the protein kinase superfamily. Ser/Thr protein kinase family.</text>
</comment>
<comment type="sequence caution" evidence="6">
    <conflict type="erroneous gene model prediction">
        <sequence resource="EMBL-CDS" id="BAT11880"/>
    </conflict>
</comment>
<feature type="initiator methionine" description="Removed" evidence="1">
    <location>
        <position position="1"/>
    </location>
</feature>
<feature type="chain" id="PRO_0000443239" description="Serine/threonine-protein kinase BSK1-2">
    <location>
        <begin position="2"/>
        <end position="522"/>
    </location>
</feature>
<feature type="domain" description="Protein kinase" evidence="2">
    <location>
        <begin position="79"/>
        <end position="338"/>
    </location>
</feature>
<feature type="region of interest" description="Disordered" evidence="3">
    <location>
        <begin position="1"/>
        <end position="54"/>
    </location>
</feature>
<feature type="active site" description="Proton acceptor" evidence="2">
    <location>
        <position position="205"/>
    </location>
</feature>
<feature type="binding site" evidence="2">
    <location>
        <begin position="85"/>
        <end position="93"/>
    </location>
    <ligand>
        <name>ATP</name>
        <dbReference type="ChEBI" id="CHEBI:30616"/>
    </ligand>
</feature>
<feature type="binding site" evidence="2">
    <location>
        <position position="111"/>
    </location>
    <ligand>
        <name>ATP</name>
        <dbReference type="ChEBI" id="CHEBI:30616"/>
    </ligand>
</feature>
<feature type="lipid moiety-binding region" description="N-myristoyl glycine" evidence="1">
    <location>
        <position position="2"/>
    </location>
</feature>
<keyword id="KW-0067">ATP-binding</keyword>
<keyword id="KW-1003">Cell membrane</keyword>
<keyword id="KW-0418">Kinase</keyword>
<keyword id="KW-0449">Lipoprotein</keyword>
<keyword id="KW-0472">Membrane</keyword>
<keyword id="KW-0519">Myristate</keyword>
<keyword id="KW-0547">Nucleotide-binding</keyword>
<keyword id="KW-0611">Plant defense</keyword>
<keyword id="KW-1185">Reference proteome</keyword>
<keyword id="KW-0723">Serine/threonine-protein kinase</keyword>
<keyword id="KW-0808">Transferase</keyword>
<reference key="1">
    <citation type="journal article" date="2003" name="Science">
        <title>In-depth view of structure, activity, and evolution of rice chromosome 10.</title>
        <authorList>
            <person name="Yu Y."/>
            <person name="Rambo T."/>
            <person name="Currie J."/>
            <person name="Saski C."/>
            <person name="Kim H.-R."/>
            <person name="Collura K."/>
            <person name="Thompson S."/>
            <person name="Simmons J."/>
            <person name="Yang T.-J."/>
            <person name="Nah G."/>
            <person name="Patel A.J."/>
            <person name="Thurmond S."/>
            <person name="Henry D."/>
            <person name="Oates R."/>
            <person name="Palmer M."/>
            <person name="Pries G."/>
            <person name="Gibson J."/>
            <person name="Anderson H."/>
            <person name="Paradkar M."/>
            <person name="Crane L."/>
            <person name="Dale J."/>
            <person name="Carver M.B."/>
            <person name="Wood T."/>
            <person name="Frisch D."/>
            <person name="Engler F."/>
            <person name="Soderlund C."/>
            <person name="Palmer L.E."/>
            <person name="Teytelman L."/>
            <person name="Nascimento L."/>
            <person name="De la Bastide M."/>
            <person name="Spiegel L."/>
            <person name="Ware D."/>
            <person name="O'Shaughnessy A."/>
            <person name="Dike S."/>
            <person name="Dedhia N."/>
            <person name="Preston R."/>
            <person name="Huang E."/>
            <person name="Ferraro K."/>
            <person name="Kuit K."/>
            <person name="Miller B."/>
            <person name="Zutavern T."/>
            <person name="Katzenberger F."/>
            <person name="Muller S."/>
            <person name="Balija V."/>
            <person name="Martienssen R.A."/>
            <person name="Stein L."/>
            <person name="Minx P."/>
            <person name="Johnson D."/>
            <person name="Cordum H."/>
            <person name="Mardis E."/>
            <person name="Cheng Z."/>
            <person name="Jiang J."/>
            <person name="Wilson R."/>
            <person name="McCombie W.R."/>
            <person name="Wing R.A."/>
            <person name="Yuan Q."/>
            <person name="Ouyang S."/>
            <person name="Liu J."/>
            <person name="Jones K.M."/>
            <person name="Gansberger K."/>
            <person name="Moffat K."/>
            <person name="Hill J."/>
            <person name="Tsitrin T."/>
            <person name="Overton L."/>
            <person name="Bera J."/>
            <person name="Kim M."/>
            <person name="Jin S."/>
            <person name="Tallon L."/>
            <person name="Ciecko A."/>
            <person name="Pai G."/>
            <person name="Van Aken S."/>
            <person name="Utterback T."/>
            <person name="Reidmuller S."/>
            <person name="Bormann J."/>
            <person name="Feldblyum T."/>
            <person name="Hsiao J."/>
            <person name="Zismann V."/>
            <person name="Blunt S."/>
            <person name="de Vazeille A.R."/>
            <person name="Shaffer T."/>
            <person name="Koo H."/>
            <person name="Suh B."/>
            <person name="Yang Q."/>
            <person name="Haas B."/>
            <person name="Peterson J."/>
            <person name="Pertea M."/>
            <person name="Volfovsky N."/>
            <person name="Wortman J."/>
            <person name="White O."/>
            <person name="Salzberg S.L."/>
            <person name="Fraser C.M."/>
            <person name="Buell C.R."/>
            <person name="Messing J."/>
            <person name="Song R."/>
            <person name="Fuks G."/>
            <person name="Llaca V."/>
            <person name="Kovchak S."/>
            <person name="Young S."/>
            <person name="Bowers J.E."/>
            <person name="Paterson A.H."/>
            <person name="Johns M.A."/>
            <person name="Mao L."/>
            <person name="Pan H."/>
            <person name="Dean R.A."/>
        </authorList>
    </citation>
    <scope>NUCLEOTIDE SEQUENCE [LARGE SCALE GENOMIC DNA]</scope>
    <source>
        <strain>cv. Nipponbare</strain>
    </source>
</reference>
<reference key="2">
    <citation type="journal article" date="2005" name="Nature">
        <title>The map-based sequence of the rice genome.</title>
        <authorList>
            <consortium name="International rice genome sequencing project (IRGSP)"/>
        </authorList>
    </citation>
    <scope>NUCLEOTIDE SEQUENCE [LARGE SCALE GENOMIC DNA]</scope>
    <source>
        <strain>cv. Nipponbare</strain>
    </source>
</reference>
<reference key="3">
    <citation type="journal article" date="2008" name="Nucleic Acids Res.">
        <title>The rice annotation project database (RAP-DB): 2008 update.</title>
        <authorList>
            <consortium name="The rice annotation project (RAP)"/>
        </authorList>
    </citation>
    <scope>GENOME REANNOTATION</scope>
    <source>
        <strain>cv. Nipponbare</strain>
    </source>
</reference>
<reference key="4">
    <citation type="journal article" date="2013" name="Rice">
        <title>Improvement of the Oryza sativa Nipponbare reference genome using next generation sequence and optical map data.</title>
        <authorList>
            <person name="Kawahara Y."/>
            <person name="de la Bastide M."/>
            <person name="Hamilton J.P."/>
            <person name="Kanamori H."/>
            <person name="McCombie W.R."/>
            <person name="Ouyang S."/>
            <person name="Schwartz D.C."/>
            <person name="Tanaka T."/>
            <person name="Wu J."/>
            <person name="Zhou S."/>
            <person name="Childs K.L."/>
            <person name="Davidson R.M."/>
            <person name="Lin H."/>
            <person name="Quesada-Ocampo L."/>
            <person name="Vaillancourt B."/>
            <person name="Sakai H."/>
            <person name="Lee S.S."/>
            <person name="Kim J."/>
            <person name="Numa H."/>
            <person name="Itoh T."/>
            <person name="Buell C.R."/>
            <person name="Matsumoto T."/>
        </authorList>
    </citation>
    <scope>GENOME REANNOTATION</scope>
    <source>
        <strain>cv. Nipponbare</strain>
    </source>
</reference>
<reference key="5">
    <citation type="journal article" date="2005" name="PLoS Biol.">
        <title>The genomes of Oryza sativa: a history of duplications.</title>
        <authorList>
            <person name="Yu J."/>
            <person name="Wang J."/>
            <person name="Lin W."/>
            <person name="Li S."/>
            <person name="Li H."/>
            <person name="Zhou J."/>
            <person name="Ni P."/>
            <person name="Dong W."/>
            <person name="Hu S."/>
            <person name="Zeng C."/>
            <person name="Zhang J."/>
            <person name="Zhang Y."/>
            <person name="Li R."/>
            <person name="Xu Z."/>
            <person name="Li S."/>
            <person name="Li X."/>
            <person name="Zheng H."/>
            <person name="Cong L."/>
            <person name="Lin L."/>
            <person name="Yin J."/>
            <person name="Geng J."/>
            <person name="Li G."/>
            <person name="Shi J."/>
            <person name="Liu J."/>
            <person name="Lv H."/>
            <person name="Li J."/>
            <person name="Wang J."/>
            <person name="Deng Y."/>
            <person name="Ran L."/>
            <person name="Shi X."/>
            <person name="Wang X."/>
            <person name="Wu Q."/>
            <person name="Li C."/>
            <person name="Ren X."/>
            <person name="Wang J."/>
            <person name="Wang X."/>
            <person name="Li D."/>
            <person name="Liu D."/>
            <person name="Zhang X."/>
            <person name="Ji Z."/>
            <person name="Zhao W."/>
            <person name="Sun Y."/>
            <person name="Zhang Z."/>
            <person name="Bao J."/>
            <person name="Han Y."/>
            <person name="Dong L."/>
            <person name="Ji J."/>
            <person name="Chen P."/>
            <person name="Wu S."/>
            <person name="Liu J."/>
            <person name="Xiao Y."/>
            <person name="Bu D."/>
            <person name="Tan J."/>
            <person name="Yang L."/>
            <person name="Ye C."/>
            <person name="Zhang J."/>
            <person name="Xu J."/>
            <person name="Zhou Y."/>
            <person name="Yu Y."/>
            <person name="Zhang B."/>
            <person name="Zhuang S."/>
            <person name="Wei H."/>
            <person name="Liu B."/>
            <person name="Lei M."/>
            <person name="Yu H."/>
            <person name="Li Y."/>
            <person name="Xu H."/>
            <person name="Wei S."/>
            <person name="He X."/>
            <person name="Fang L."/>
            <person name="Zhang Z."/>
            <person name="Zhang Y."/>
            <person name="Huang X."/>
            <person name="Su Z."/>
            <person name="Tong W."/>
            <person name="Li J."/>
            <person name="Tong Z."/>
            <person name="Li S."/>
            <person name="Ye J."/>
            <person name="Wang L."/>
            <person name="Fang L."/>
            <person name="Lei T."/>
            <person name="Chen C.-S."/>
            <person name="Chen H.-C."/>
            <person name="Xu Z."/>
            <person name="Li H."/>
            <person name="Huang H."/>
            <person name="Zhang F."/>
            <person name="Xu H."/>
            <person name="Li N."/>
            <person name="Zhao C."/>
            <person name="Li S."/>
            <person name="Dong L."/>
            <person name="Huang Y."/>
            <person name="Li L."/>
            <person name="Xi Y."/>
            <person name="Qi Q."/>
            <person name="Li W."/>
            <person name="Zhang B."/>
            <person name="Hu W."/>
            <person name="Zhang Y."/>
            <person name="Tian X."/>
            <person name="Jiao Y."/>
            <person name="Liang X."/>
            <person name="Jin J."/>
            <person name="Gao L."/>
            <person name="Zheng W."/>
            <person name="Hao B."/>
            <person name="Liu S.-M."/>
            <person name="Wang W."/>
            <person name="Yuan L."/>
            <person name="Cao M."/>
            <person name="McDermott J."/>
            <person name="Samudrala R."/>
            <person name="Wang J."/>
            <person name="Wong G.K.-S."/>
            <person name="Yang H."/>
        </authorList>
    </citation>
    <scope>NUCLEOTIDE SEQUENCE [LARGE SCALE GENOMIC DNA]</scope>
    <source>
        <strain>cv. Nipponbare</strain>
    </source>
</reference>
<reference key="6">
    <citation type="journal article" date="2017" name="Front. Plant Sci.">
        <title>OsBSK1-2, an orthologous of AtBSK1, is involved in rice immunity.</title>
        <authorList>
            <person name="Wang J."/>
            <person name="Shi H."/>
            <person name="Zhou L."/>
            <person name="Peng C."/>
            <person name="Liu D."/>
            <person name="Zhou X."/>
            <person name="Wu W."/>
            <person name="Yin J."/>
            <person name="Qin H."/>
            <person name="Ma W."/>
            <person name="He M."/>
            <person name="Li W."/>
            <person name="Wang J."/>
            <person name="Li S."/>
            <person name="Chen X."/>
        </authorList>
    </citation>
    <scope>FUNCTION</scope>
    <scope>INDUCTION</scope>
    <source>
        <strain>cv. Kitaake</strain>
    </source>
</reference>
<gene>
    <name evidence="5" type="primary">BSK1-2</name>
    <name evidence="9" type="ordered locus">Os10g0542800</name>
    <name evidence="8" type="ordered locus">LOC_Os10g39670</name>
    <name evidence="10" type="ORF">OsJ_32329</name>
    <name evidence="7" type="ORF">OSJNBb0015I11.13</name>
</gene>
<name>BSK12_ORYSJ</name>
<proteinExistence type="evidence at transcript level"/>
<organism>
    <name type="scientific">Oryza sativa subsp. japonica</name>
    <name type="common">Rice</name>
    <dbReference type="NCBI Taxonomy" id="39947"/>
    <lineage>
        <taxon>Eukaryota</taxon>
        <taxon>Viridiplantae</taxon>
        <taxon>Streptophyta</taxon>
        <taxon>Embryophyta</taxon>
        <taxon>Tracheophyta</taxon>
        <taxon>Spermatophyta</taxon>
        <taxon>Magnoliopsida</taxon>
        <taxon>Liliopsida</taxon>
        <taxon>Poales</taxon>
        <taxon>Poaceae</taxon>
        <taxon>BOP clade</taxon>
        <taxon>Oryzoideae</taxon>
        <taxon>Oryzeae</taxon>
        <taxon>Oryzinae</taxon>
        <taxon>Oryza</taxon>
        <taxon>Oryza sativa</taxon>
    </lineage>
</organism>
<protein>
    <recommendedName>
        <fullName evidence="6">Serine/threonine-protein kinase BSK1-2</fullName>
        <ecNumber evidence="6">2.7.11.1</ecNumber>
    </recommendedName>
    <alternativeName>
        <fullName evidence="5">Brassinosteroid-signaling kinase 1-2</fullName>
        <shortName evidence="5">OsBSK1-2</shortName>
    </alternativeName>
</protein>
<sequence length="522" mass="58177">MGCCGSSLRVGSHAPEKPPRRARPPPPPPQPHHPRRPSFTLNAHQAAASSSAASAAPAPAFAEFSLAELREATGGFAAANIVSESGEKAPNLVYRGRLQGAGGGGRAIAVKKFGKLAWPDPKQFAEEARGVGKLRHRRMANLIGYCCDGDERLLVAEFMPNDTLAKHLFHWENKAIEWAMRLRVAYNIAEALEYCSNEERPLYHDLNAYRVLFDENGDPRLSCFGLMKNSRDGKSYSTNLAYTPPEYLRNGRVTLESVVFSFGTILIDLLSGKRIPPTLALDMIRSRSIQAIMETNLEGKYSIEEATTLVDLASKCLQYEPRDRPDIKKLVSILQPLQTKSEVPSYVMLGVPKPEEVPKAPPAPQHPLSPMGEACSRMDLTAIHQILVSTHYRDDEGTNELSFQEWTQQMRDMLDARKRGDFAFRDKNFKQAIDCYTQFVDVGTMVSPTVYARRSLCHLMCDQPDAALRDAMQAQCVYPDWPTAFYMQAVALSKLNMQSDSLDMLNEASQLEEKRQKSIKGP</sequence>
<evidence type="ECO:0000255" key="1"/>
<evidence type="ECO:0000255" key="2">
    <source>
        <dbReference type="PROSITE-ProRule" id="PRU00159"/>
    </source>
</evidence>
<evidence type="ECO:0000256" key="3">
    <source>
        <dbReference type="SAM" id="MobiDB-lite"/>
    </source>
</evidence>
<evidence type="ECO:0000269" key="4">
    <source>
    </source>
</evidence>
<evidence type="ECO:0000303" key="5">
    <source>
    </source>
</evidence>
<evidence type="ECO:0000305" key="6"/>
<evidence type="ECO:0000312" key="7">
    <source>
        <dbReference type="EMBL" id="AAG13605.1"/>
    </source>
</evidence>
<evidence type="ECO:0000312" key="8">
    <source>
        <dbReference type="EMBL" id="ABB47948.2"/>
    </source>
</evidence>
<evidence type="ECO:0000312" key="9">
    <source>
        <dbReference type="EMBL" id="BAT11880.1"/>
    </source>
</evidence>
<evidence type="ECO:0000312" key="10">
    <source>
        <dbReference type="EMBL" id="EAZ16855.1"/>
    </source>
</evidence>
<accession>Q336V9</accession>
<accession>A0A0P0XWR2</accession>
<accession>Q9FWF0</accession>
<dbReference type="EC" id="2.7.11.1" evidence="6"/>
<dbReference type="EMBL" id="AC051633">
    <property type="protein sequence ID" value="AAG13605.1"/>
    <property type="molecule type" value="Genomic_DNA"/>
</dbReference>
<dbReference type="EMBL" id="DP000086">
    <property type="protein sequence ID" value="ABB47948.2"/>
    <property type="molecule type" value="Genomic_DNA"/>
</dbReference>
<dbReference type="EMBL" id="AP014966">
    <property type="protein sequence ID" value="BAT11880.1"/>
    <property type="status" value="ALT_SEQ"/>
    <property type="molecule type" value="Genomic_DNA"/>
</dbReference>
<dbReference type="EMBL" id="CM000147">
    <property type="protein sequence ID" value="EAZ16855.1"/>
    <property type="molecule type" value="Genomic_DNA"/>
</dbReference>
<dbReference type="SMR" id="Q336V9"/>
<dbReference type="FunCoup" id="Q336V9">
    <property type="interactions" value="2497"/>
</dbReference>
<dbReference type="STRING" id="39947.Q336V9"/>
<dbReference type="PaxDb" id="39947-Q336V9"/>
<dbReference type="EnsemblPlants" id="Os10t0542800-01">
    <property type="protein sequence ID" value="Os10t0542800-01"/>
    <property type="gene ID" value="Os10g0542800"/>
</dbReference>
<dbReference type="Gramene" id="Os10t0542800-01">
    <property type="protein sequence ID" value="Os10t0542800-01"/>
    <property type="gene ID" value="Os10g0542800"/>
</dbReference>
<dbReference type="KEGG" id="osa:9270011"/>
<dbReference type="eggNOG" id="ENOG502QQT6">
    <property type="taxonomic scope" value="Eukaryota"/>
</dbReference>
<dbReference type="InParanoid" id="Q336V9"/>
<dbReference type="OrthoDB" id="1028014at2759"/>
<dbReference type="PlantReactome" id="R-OSA-5632095">
    <property type="pathway name" value="Brassinosteroid signaling"/>
</dbReference>
<dbReference type="Proteomes" id="UP000000763">
    <property type="component" value="Chromosome 10"/>
</dbReference>
<dbReference type="Proteomes" id="UP000007752">
    <property type="component" value="Chromosome 10"/>
</dbReference>
<dbReference type="Proteomes" id="UP000059680">
    <property type="component" value="Chromosome 10"/>
</dbReference>
<dbReference type="GO" id="GO:0005886">
    <property type="term" value="C:plasma membrane"/>
    <property type="evidence" value="ECO:0007669"/>
    <property type="project" value="UniProtKB-SubCell"/>
</dbReference>
<dbReference type="GO" id="GO:0005524">
    <property type="term" value="F:ATP binding"/>
    <property type="evidence" value="ECO:0007669"/>
    <property type="project" value="UniProtKB-KW"/>
</dbReference>
<dbReference type="GO" id="GO:0106310">
    <property type="term" value="F:protein serine kinase activity"/>
    <property type="evidence" value="ECO:0007669"/>
    <property type="project" value="RHEA"/>
</dbReference>
<dbReference type="GO" id="GO:0004674">
    <property type="term" value="F:protein serine/threonine kinase activity"/>
    <property type="evidence" value="ECO:0007669"/>
    <property type="project" value="UniProtKB-KW"/>
</dbReference>
<dbReference type="GO" id="GO:0009742">
    <property type="term" value="P:brassinosteroid mediated signaling pathway"/>
    <property type="evidence" value="ECO:0000318"/>
    <property type="project" value="GO_Central"/>
</dbReference>
<dbReference type="GO" id="GO:0050832">
    <property type="term" value="P:defense response to fungus"/>
    <property type="evidence" value="ECO:0000315"/>
    <property type="project" value="UniProtKB"/>
</dbReference>
<dbReference type="GO" id="GO:0045087">
    <property type="term" value="P:innate immune response"/>
    <property type="evidence" value="ECO:0000315"/>
    <property type="project" value="UniProtKB"/>
</dbReference>
<dbReference type="FunFam" id="1.25.40.10:FF:000016">
    <property type="entry name" value="probable serine/threonine-protein kinase At4g35230"/>
    <property type="match status" value="1"/>
</dbReference>
<dbReference type="FunFam" id="3.30.200.20:FF:000154">
    <property type="entry name" value="probable serine/threonine-protein kinase At4g35230"/>
    <property type="match status" value="1"/>
</dbReference>
<dbReference type="FunFam" id="1.10.510.10:FF:000069">
    <property type="entry name" value="probable serine/threonine-protein kinase At5g41260"/>
    <property type="match status" value="1"/>
</dbReference>
<dbReference type="Gene3D" id="3.30.200.20">
    <property type="entry name" value="Phosphorylase Kinase, domain 1"/>
    <property type="match status" value="1"/>
</dbReference>
<dbReference type="Gene3D" id="1.25.40.10">
    <property type="entry name" value="Tetratricopeptide repeat domain"/>
    <property type="match status" value="1"/>
</dbReference>
<dbReference type="Gene3D" id="1.10.510.10">
    <property type="entry name" value="Transferase(Phosphotransferase) domain 1"/>
    <property type="match status" value="1"/>
</dbReference>
<dbReference type="InterPro" id="IPR045845">
    <property type="entry name" value="BSK"/>
</dbReference>
<dbReference type="InterPro" id="IPR011009">
    <property type="entry name" value="Kinase-like_dom_sf"/>
</dbReference>
<dbReference type="InterPro" id="IPR000719">
    <property type="entry name" value="Prot_kinase_dom"/>
</dbReference>
<dbReference type="InterPro" id="IPR001245">
    <property type="entry name" value="Ser-Thr/Tyr_kinase_cat_dom"/>
</dbReference>
<dbReference type="InterPro" id="IPR011990">
    <property type="entry name" value="TPR-like_helical_dom_sf"/>
</dbReference>
<dbReference type="PANTHER" id="PTHR45863">
    <property type="entry name" value="SERINE/THREONINE-PROTEIN KINASE BSK5"/>
    <property type="match status" value="1"/>
</dbReference>
<dbReference type="PANTHER" id="PTHR45863:SF22">
    <property type="entry name" value="SERINE_THREONINE-PROTEIN KINASE BSK1"/>
    <property type="match status" value="1"/>
</dbReference>
<dbReference type="Pfam" id="PF07714">
    <property type="entry name" value="PK_Tyr_Ser-Thr"/>
    <property type="match status" value="1"/>
</dbReference>
<dbReference type="SUPFAM" id="SSF56112">
    <property type="entry name" value="Protein kinase-like (PK-like)"/>
    <property type="match status" value="1"/>
</dbReference>
<dbReference type="SUPFAM" id="SSF48452">
    <property type="entry name" value="TPR-like"/>
    <property type="match status" value="1"/>
</dbReference>
<dbReference type="PROSITE" id="PS50011">
    <property type="entry name" value="PROTEIN_KINASE_DOM"/>
    <property type="match status" value="1"/>
</dbReference>